<name>RS18_LISIN</name>
<feature type="chain" id="PRO_0000111171" description="Small ribosomal subunit protein bS18">
    <location>
        <begin position="1"/>
        <end position="79"/>
    </location>
</feature>
<gene>
    <name evidence="1" type="primary">rpsR</name>
    <name type="ordered locus">lin0039</name>
</gene>
<comment type="function">
    <text evidence="1">Binds as a heterodimer with protein bS6 to the central domain of the 16S rRNA, where it helps stabilize the platform of the 30S subunit.</text>
</comment>
<comment type="subunit">
    <text evidence="1">Part of the 30S ribosomal subunit. Forms a tight heterodimer with protein bS6.</text>
</comment>
<comment type="similarity">
    <text evidence="1">Belongs to the bacterial ribosomal protein bS18 family.</text>
</comment>
<protein>
    <recommendedName>
        <fullName evidence="1">Small ribosomal subunit protein bS18</fullName>
    </recommendedName>
    <alternativeName>
        <fullName evidence="2">30S ribosomal protein S18</fullName>
    </alternativeName>
</protein>
<sequence>MAGGRRGGRRRKKVCYFTSNGITHIDYKDVELLKKFVSERGKILPRRVTGTSAKYQRKLTVAIKRSRQMALLPFVAEEK</sequence>
<accession>P66462</accession>
<accession>Q92FR4</accession>
<evidence type="ECO:0000255" key="1">
    <source>
        <dbReference type="HAMAP-Rule" id="MF_00270"/>
    </source>
</evidence>
<evidence type="ECO:0000305" key="2"/>
<organism>
    <name type="scientific">Listeria innocua serovar 6a (strain ATCC BAA-680 / CLIP 11262)</name>
    <dbReference type="NCBI Taxonomy" id="272626"/>
    <lineage>
        <taxon>Bacteria</taxon>
        <taxon>Bacillati</taxon>
        <taxon>Bacillota</taxon>
        <taxon>Bacilli</taxon>
        <taxon>Bacillales</taxon>
        <taxon>Listeriaceae</taxon>
        <taxon>Listeria</taxon>
    </lineage>
</organism>
<reference key="1">
    <citation type="journal article" date="2001" name="Science">
        <title>Comparative genomics of Listeria species.</title>
        <authorList>
            <person name="Glaser P."/>
            <person name="Frangeul L."/>
            <person name="Buchrieser C."/>
            <person name="Rusniok C."/>
            <person name="Amend A."/>
            <person name="Baquero F."/>
            <person name="Berche P."/>
            <person name="Bloecker H."/>
            <person name="Brandt P."/>
            <person name="Chakraborty T."/>
            <person name="Charbit A."/>
            <person name="Chetouani F."/>
            <person name="Couve E."/>
            <person name="de Daruvar A."/>
            <person name="Dehoux P."/>
            <person name="Domann E."/>
            <person name="Dominguez-Bernal G."/>
            <person name="Duchaud E."/>
            <person name="Durant L."/>
            <person name="Dussurget O."/>
            <person name="Entian K.-D."/>
            <person name="Fsihi H."/>
            <person name="Garcia-del Portillo F."/>
            <person name="Garrido P."/>
            <person name="Gautier L."/>
            <person name="Goebel W."/>
            <person name="Gomez-Lopez N."/>
            <person name="Hain T."/>
            <person name="Hauf J."/>
            <person name="Jackson D."/>
            <person name="Jones L.-M."/>
            <person name="Kaerst U."/>
            <person name="Kreft J."/>
            <person name="Kuhn M."/>
            <person name="Kunst F."/>
            <person name="Kurapkat G."/>
            <person name="Madueno E."/>
            <person name="Maitournam A."/>
            <person name="Mata Vicente J."/>
            <person name="Ng E."/>
            <person name="Nedjari H."/>
            <person name="Nordsiek G."/>
            <person name="Novella S."/>
            <person name="de Pablos B."/>
            <person name="Perez-Diaz J.-C."/>
            <person name="Purcell R."/>
            <person name="Remmel B."/>
            <person name="Rose M."/>
            <person name="Schlueter T."/>
            <person name="Simoes N."/>
            <person name="Tierrez A."/>
            <person name="Vazquez-Boland J.-A."/>
            <person name="Voss H."/>
            <person name="Wehland J."/>
            <person name="Cossart P."/>
        </authorList>
    </citation>
    <scope>NUCLEOTIDE SEQUENCE [LARGE SCALE GENOMIC DNA]</scope>
    <source>
        <strain>ATCC BAA-680 / CLIP 11262</strain>
    </source>
</reference>
<dbReference type="EMBL" id="AL596163">
    <property type="protein sequence ID" value="CAC95272.1"/>
    <property type="molecule type" value="Genomic_DNA"/>
</dbReference>
<dbReference type="PIR" id="AH1437">
    <property type="entry name" value="AH1437"/>
</dbReference>
<dbReference type="RefSeq" id="WP_003721669.1">
    <property type="nucleotide sequence ID" value="NC_003212.1"/>
</dbReference>
<dbReference type="SMR" id="P66462"/>
<dbReference type="STRING" id="272626.gene:17564350"/>
<dbReference type="GeneID" id="93237944"/>
<dbReference type="KEGG" id="lin:rpsR"/>
<dbReference type="eggNOG" id="COG0238">
    <property type="taxonomic scope" value="Bacteria"/>
</dbReference>
<dbReference type="HOGENOM" id="CLU_148710_2_2_9"/>
<dbReference type="OrthoDB" id="9812008at2"/>
<dbReference type="Proteomes" id="UP000002513">
    <property type="component" value="Chromosome"/>
</dbReference>
<dbReference type="GO" id="GO:0022627">
    <property type="term" value="C:cytosolic small ribosomal subunit"/>
    <property type="evidence" value="ECO:0007669"/>
    <property type="project" value="TreeGrafter"/>
</dbReference>
<dbReference type="GO" id="GO:0070181">
    <property type="term" value="F:small ribosomal subunit rRNA binding"/>
    <property type="evidence" value="ECO:0007669"/>
    <property type="project" value="TreeGrafter"/>
</dbReference>
<dbReference type="GO" id="GO:0003735">
    <property type="term" value="F:structural constituent of ribosome"/>
    <property type="evidence" value="ECO:0007669"/>
    <property type="project" value="InterPro"/>
</dbReference>
<dbReference type="GO" id="GO:0006412">
    <property type="term" value="P:translation"/>
    <property type="evidence" value="ECO:0007669"/>
    <property type="project" value="UniProtKB-UniRule"/>
</dbReference>
<dbReference type="FunFam" id="4.10.640.10:FF:000003">
    <property type="entry name" value="30S ribosomal protein S18"/>
    <property type="match status" value="1"/>
</dbReference>
<dbReference type="Gene3D" id="4.10.640.10">
    <property type="entry name" value="Ribosomal protein S18"/>
    <property type="match status" value="1"/>
</dbReference>
<dbReference type="HAMAP" id="MF_00270">
    <property type="entry name" value="Ribosomal_bS18"/>
    <property type="match status" value="1"/>
</dbReference>
<dbReference type="InterPro" id="IPR001648">
    <property type="entry name" value="Ribosomal_bS18"/>
</dbReference>
<dbReference type="InterPro" id="IPR018275">
    <property type="entry name" value="Ribosomal_bS18_CS"/>
</dbReference>
<dbReference type="InterPro" id="IPR036870">
    <property type="entry name" value="Ribosomal_bS18_sf"/>
</dbReference>
<dbReference type="NCBIfam" id="TIGR00165">
    <property type="entry name" value="S18"/>
    <property type="match status" value="1"/>
</dbReference>
<dbReference type="PANTHER" id="PTHR13479">
    <property type="entry name" value="30S RIBOSOMAL PROTEIN S18"/>
    <property type="match status" value="1"/>
</dbReference>
<dbReference type="PANTHER" id="PTHR13479:SF40">
    <property type="entry name" value="SMALL RIBOSOMAL SUBUNIT PROTEIN BS18M"/>
    <property type="match status" value="1"/>
</dbReference>
<dbReference type="Pfam" id="PF01084">
    <property type="entry name" value="Ribosomal_S18"/>
    <property type="match status" value="1"/>
</dbReference>
<dbReference type="PRINTS" id="PR00974">
    <property type="entry name" value="RIBOSOMALS18"/>
</dbReference>
<dbReference type="SUPFAM" id="SSF46911">
    <property type="entry name" value="Ribosomal protein S18"/>
    <property type="match status" value="1"/>
</dbReference>
<dbReference type="PROSITE" id="PS00057">
    <property type="entry name" value="RIBOSOMAL_S18"/>
    <property type="match status" value="1"/>
</dbReference>
<keyword id="KW-0687">Ribonucleoprotein</keyword>
<keyword id="KW-0689">Ribosomal protein</keyword>
<keyword id="KW-0694">RNA-binding</keyword>
<keyword id="KW-0699">rRNA-binding</keyword>
<proteinExistence type="inferred from homology"/>